<dbReference type="EC" id="2.3.1.65" evidence="2 4 6 8"/>
<dbReference type="EC" id="3.1.2.27" evidence="2 4 8"/>
<dbReference type="EC" id="3.1.2.2" evidence="4"/>
<dbReference type="EMBL" id="L34081">
    <property type="protein sequence ID" value="AAC37550.1"/>
    <property type="molecule type" value="mRNA"/>
</dbReference>
<dbReference type="EMBL" id="CR541918">
    <property type="protein sequence ID" value="CAG46716.1"/>
    <property type="molecule type" value="mRNA"/>
</dbReference>
<dbReference type="EMBL" id="AL359893">
    <property type="status" value="NOT_ANNOTATED_CDS"/>
    <property type="molecule type" value="Genomic_DNA"/>
</dbReference>
<dbReference type="EMBL" id="CH471105">
    <property type="protein sequence ID" value="EAW58943.1"/>
    <property type="molecule type" value="Genomic_DNA"/>
</dbReference>
<dbReference type="EMBL" id="BC009567">
    <property type="protein sequence ID" value="AAH09567.1"/>
    <property type="molecule type" value="mRNA"/>
</dbReference>
<dbReference type="EMBL" id="BC107424">
    <property type="protein sequence ID" value="AAI07425.1"/>
    <property type="molecule type" value="mRNA"/>
</dbReference>
<dbReference type="CCDS" id="CCDS6752.1"/>
<dbReference type="PIR" id="A53965">
    <property type="entry name" value="A53965"/>
</dbReference>
<dbReference type="RefSeq" id="NP_001121082.1">
    <property type="nucleotide sequence ID" value="NM_001127610.2"/>
</dbReference>
<dbReference type="RefSeq" id="NP_001361644.1">
    <property type="nucleotide sequence ID" value="NM_001374715.1"/>
</dbReference>
<dbReference type="RefSeq" id="NP_001692.1">
    <property type="nucleotide sequence ID" value="NM_001701.4"/>
</dbReference>
<dbReference type="SMR" id="Q14032"/>
<dbReference type="BioGRID" id="107046">
    <property type="interactions" value="34"/>
</dbReference>
<dbReference type="FunCoup" id="Q14032">
    <property type="interactions" value="146"/>
</dbReference>
<dbReference type="IntAct" id="Q14032">
    <property type="interactions" value="38"/>
</dbReference>
<dbReference type="MINT" id="Q14032"/>
<dbReference type="STRING" id="9606.ENSP00000259407"/>
<dbReference type="DrugBank" id="DB00145">
    <property type="generic name" value="Glycine"/>
</dbReference>
<dbReference type="DrugBank" id="DB01956">
    <property type="generic name" value="Taurine"/>
</dbReference>
<dbReference type="SwissLipids" id="SLP:000001309"/>
<dbReference type="ESTHER" id="human-BAAT">
    <property type="family name" value="Acyl-CoA_Thioesterase"/>
</dbReference>
<dbReference type="MEROPS" id="S09.A50"/>
<dbReference type="CarbonylDB" id="Q14032"/>
<dbReference type="iPTMnet" id="Q14032"/>
<dbReference type="PhosphoSitePlus" id="Q14032"/>
<dbReference type="BioMuta" id="BAAT"/>
<dbReference type="DMDM" id="74739811"/>
<dbReference type="jPOST" id="Q14032"/>
<dbReference type="MassIVE" id="Q14032"/>
<dbReference type="PaxDb" id="9606-ENSP00000259407"/>
<dbReference type="PeptideAtlas" id="Q14032"/>
<dbReference type="ProteomicsDB" id="59802"/>
<dbReference type="Antibodypedia" id="14641">
    <property type="antibodies" value="203 antibodies from 29 providers"/>
</dbReference>
<dbReference type="DNASU" id="570"/>
<dbReference type="Ensembl" id="ENST00000259407.7">
    <property type="protein sequence ID" value="ENSP00000259407.2"/>
    <property type="gene ID" value="ENSG00000136881.12"/>
</dbReference>
<dbReference type="Ensembl" id="ENST00000395051.4">
    <property type="protein sequence ID" value="ENSP00000378491.3"/>
    <property type="gene ID" value="ENSG00000136881.12"/>
</dbReference>
<dbReference type="Ensembl" id="ENST00000621712.2">
    <property type="protein sequence ID" value="ENSP00000484063.1"/>
    <property type="gene ID" value="ENSG00000276559.2"/>
</dbReference>
<dbReference type="Ensembl" id="ENST00000674556.1">
    <property type="protein sequence ID" value="ENSP00000501610.1"/>
    <property type="gene ID" value="ENSG00000136881.12"/>
</dbReference>
<dbReference type="GeneID" id="570"/>
<dbReference type="KEGG" id="hsa:570"/>
<dbReference type="MANE-Select" id="ENST00000259407.7">
    <property type="protein sequence ID" value="ENSP00000259407.2"/>
    <property type="RefSeq nucleotide sequence ID" value="NM_001701.4"/>
    <property type="RefSeq protein sequence ID" value="NP_001692.1"/>
</dbReference>
<dbReference type="UCSC" id="uc010mtd.3">
    <property type="organism name" value="human"/>
</dbReference>
<dbReference type="AGR" id="HGNC:932"/>
<dbReference type="CTD" id="570"/>
<dbReference type="DisGeNET" id="570"/>
<dbReference type="GeneCards" id="BAAT"/>
<dbReference type="HGNC" id="HGNC:932">
    <property type="gene designation" value="BAAT"/>
</dbReference>
<dbReference type="HPA" id="ENSG00000136881">
    <property type="expression patterns" value="Tissue enriched (liver)"/>
</dbReference>
<dbReference type="MalaCards" id="BAAT"/>
<dbReference type="MIM" id="602938">
    <property type="type" value="gene"/>
</dbReference>
<dbReference type="MIM" id="619232">
    <property type="type" value="phenotype"/>
</dbReference>
<dbReference type="neXtProt" id="NX_Q14032"/>
<dbReference type="OpenTargets" id="ENSG00000136881"/>
<dbReference type="Orphanet" id="238475">
    <property type="disease" value="Familial hypercholanemia"/>
</dbReference>
<dbReference type="PharmGKB" id="PA25231"/>
<dbReference type="VEuPathDB" id="HostDB:ENSG00000136881"/>
<dbReference type="eggNOG" id="ENOG502QQ8Z">
    <property type="taxonomic scope" value="Eukaryota"/>
</dbReference>
<dbReference type="GeneTree" id="ENSGT01010000222336"/>
<dbReference type="HOGENOM" id="CLU_029849_4_0_1"/>
<dbReference type="InParanoid" id="Q14032"/>
<dbReference type="OMA" id="ISKPHAM"/>
<dbReference type="OrthoDB" id="6347013at2759"/>
<dbReference type="PAN-GO" id="Q14032">
    <property type="GO annotations" value="4 GO annotations based on evolutionary models"/>
</dbReference>
<dbReference type="PhylomeDB" id="Q14032"/>
<dbReference type="TreeFam" id="TF314911"/>
<dbReference type="BRENDA" id="2.3.1.65">
    <property type="organism ID" value="2681"/>
</dbReference>
<dbReference type="PathwayCommons" id="Q14032"/>
<dbReference type="Reactome" id="R-HSA-159418">
    <property type="pathway name" value="Recycling of bile acids and salts"/>
</dbReference>
<dbReference type="Reactome" id="R-HSA-193368">
    <property type="pathway name" value="Synthesis of bile acids and bile salts via 7alpha-hydroxycholesterol"/>
</dbReference>
<dbReference type="Reactome" id="R-HSA-9033241">
    <property type="pathway name" value="Peroxisomal protein import"/>
</dbReference>
<dbReference type="SABIO-RK" id="Q14032"/>
<dbReference type="SignaLink" id="Q14032"/>
<dbReference type="BioGRID-ORCS" id="570">
    <property type="hits" value="9 hits in 1149 CRISPR screens"/>
</dbReference>
<dbReference type="GeneWiki" id="BAAT"/>
<dbReference type="GenomeRNAi" id="570"/>
<dbReference type="Pharos" id="Q14032">
    <property type="development level" value="Tbio"/>
</dbReference>
<dbReference type="PRO" id="PR:Q14032"/>
<dbReference type="Proteomes" id="UP000005640">
    <property type="component" value="Chromosome 9"/>
</dbReference>
<dbReference type="RNAct" id="Q14032">
    <property type="molecule type" value="protein"/>
</dbReference>
<dbReference type="Bgee" id="ENSG00000136881">
    <property type="expression patterns" value="Expressed in liver and 85 other cell types or tissues"/>
</dbReference>
<dbReference type="ExpressionAtlas" id="Q14032">
    <property type="expression patterns" value="baseline and differential"/>
</dbReference>
<dbReference type="GO" id="GO:0005829">
    <property type="term" value="C:cytosol"/>
    <property type="evidence" value="ECO:0000314"/>
    <property type="project" value="UniProtKB"/>
</dbReference>
<dbReference type="GO" id="GO:0043231">
    <property type="term" value="C:intracellular membrane-bounded organelle"/>
    <property type="evidence" value="ECO:0000314"/>
    <property type="project" value="HPA"/>
</dbReference>
<dbReference type="GO" id="GO:0005782">
    <property type="term" value="C:peroxisomal matrix"/>
    <property type="evidence" value="ECO:0000304"/>
    <property type="project" value="Reactome"/>
</dbReference>
<dbReference type="GO" id="GO:0005777">
    <property type="term" value="C:peroxisome"/>
    <property type="evidence" value="ECO:0000314"/>
    <property type="project" value="UniProtKB"/>
</dbReference>
<dbReference type="GO" id="GO:0016746">
    <property type="term" value="F:acyltransferase activity"/>
    <property type="evidence" value="ECO:0000304"/>
    <property type="project" value="Reactome"/>
</dbReference>
<dbReference type="GO" id="GO:0052689">
    <property type="term" value="F:carboxylic ester hydrolase activity"/>
    <property type="evidence" value="ECO:0007669"/>
    <property type="project" value="UniProtKB-KW"/>
</dbReference>
<dbReference type="GO" id="GO:0033882">
    <property type="term" value="F:choloyl-CoA hydrolase activity"/>
    <property type="evidence" value="ECO:0007669"/>
    <property type="project" value="UniProtKB-EC"/>
</dbReference>
<dbReference type="GO" id="GO:0047617">
    <property type="term" value="F:fatty acyl-CoA hydrolase activity"/>
    <property type="evidence" value="ECO:0000318"/>
    <property type="project" value="GO_Central"/>
</dbReference>
<dbReference type="GO" id="GO:0047963">
    <property type="term" value="F:glycine N-choloyltransferase activity"/>
    <property type="evidence" value="ECO:0000314"/>
    <property type="project" value="UniProtKB"/>
</dbReference>
<dbReference type="GO" id="GO:0052816">
    <property type="term" value="F:long-chain fatty acyl-CoA hydrolase activity"/>
    <property type="evidence" value="ECO:0000314"/>
    <property type="project" value="UniProtKB"/>
</dbReference>
<dbReference type="GO" id="GO:0052815">
    <property type="term" value="F:medium-chain fatty acyl-CoA hydrolase activity"/>
    <property type="evidence" value="ECO:0000314"/>
    <property type="project" value="UniProtKB"/>
</dbReference>
<dbReference type="GO" id="GO:0016410">
    <property type="term" value="F:N-acyltransferase activity"/>
    <property type="evidence" value="ECO:0000314"/>
    <property type="project" value="MGI"/>
</dbReference>
<dbReference type="GO" id="GO:0052817">
    <property type="term" value="F:very long-chain fatty acyl-CoA hydrolase activity"/>
    <property type="evidence" value="ECO:0000314"/>
    <property type="project" value="UniProtKB"/>
</dbReference>
<dbReference type="GO" id="GO:0006637">
    <property type="term" value="P:acyl-CoA metabolic process"/>
    <property type="evidence" value="ECO:0000314"/>
    <property type="project" value="UniProtKB"/>
</dbReference>
<dbReference type="GO" id="GO:0031100">
    <property type="term" value="P:animal organ regeneration"/>
    <property type="evidence" value="ECO:0007669"/>
    <property type="project" value="Ensembl"/>
</dbReference>
<dbReference type="GO" id="GO:0006699">
    <property type="term" value="P:bile acid biosynthetic process"/>
    <property type="evidence" value="ECO:0000314"/>
    <property type="project" value="UniProtKB"/>
</dbReference>
<dbReference type="GO" id="GO:0002152">
    <property type="term" value="P:bile acid conjugation"/>
    <property type="evidence" value="ECO:0000314"/>
    <property type="project" value="UniProtKB"/>
</dbReference>
<dbReference type="GO" id="GO:0008206">
    <property type="term" value="P:bile acid metabolic process"/>
    <property type="evidence" value="ECO:0000304"/>
    <property type="project" value="Reactome"/>
</dbReference>
<dbReference type="GO" id="GO:0006631">
    <property type="term" value="P:fatty acid metabolic process"/>
    <property type="evidence" value="ECO:0000318"/>
    <property type="project" value="GO_Central"/>
</dbReference>
<dbReference type="GO" id="GO:0006544">
    <property type="term" value="P:glycine metabolic process"/>
    <property type="evidence" value="ECO:0000314"/>
    <property type="project" value="UniProtKB"/>
</dbReference>
<dbReference type="GO" id="GO:0001889">
    <property type="term" value="P:liver development"/>
    <property type="evidence" value="ECO:0007669"/>
    <property type="project" value="Ensembl"/>
</dbReference>
<dbReference type="GO" id="GO:0019530">
    <property type="term" value="P:taurine metabolic process"/>
    <property type="evidence" value="ECO:0000314"/>
    <property type="project" value="UniProtKB"/>
</dbReference>
<dbReference type="FunFam" id="2.60.40.2240:FF:000001">
    <property type="entry name" value="acyl-coenzyme A thioesterase 4"/>
    <property type="match status" value="1"/>
</dbReference>
<dbReference type="FunFam" id="3.40.50.1820:FF:000024">
    <property type="entry name" value="acyl-coenzyme A thioesterase 4"/>
    <property type="match status" value="1"/>
</dbReference>
<dbReference type="Gene3D" id="2.60.40.2240">
    <property type="entry name" value="Acyl-CoA thioester hydrolase/BAAT N-terminal domain"/>
    <property type="match status" value="1"/>
</dbReference>
<dbReference type="Gene3D" id="3.40.50.1820">
    <property type="entry name" value="alpha/beta hydrolase"/>
    <property type="match status" value="1"/>
</dbReference>
<dbReference type="InterPro" id="IPR029058">
    <property type="entry name" value="AB_hydrolase_fold"/>
</dbReference>
<dbReference type="InterPro" id="IPR016662">
    <property type="entry name" value="Acyl-CoA_thioEstase_long-chain"/>
</dbReference>
<dbReference type="InterPro" id="IPR014940">
    <property type="entry name" value="BAAT_C"/>
</dbReference>
<dbReference type="InterPro" id="IPR006862">
    <property type="entry name" value="Thio_Ohase/aa_AcTrfase"/>
</dbReference>
<dbReference type="InterPro" id="IPR042490">
    <property type="entry name" value="Thio_Ohase/BAAT_N"/>
</dbReference>
<dbReference type="PANTHER" id="PTHR10824">
    <property type="entry name" value="ACYL-COENZYME A THIOESTERASE-RELATED"/>
    <property type="match status" value="1"/>
</dbReference>
<dbReference type="PANTHER" id="PTHR10824:SF18">
    <property type="entry name" value="BILE ACID-COA:AMINO ACID N-ACYLTRANSFERASE"/>
    <property type="match status" value="1"/>
</dbReference>
<dbReference type="Pfam" id="PF08840">
    <property type="entry name" value="BAAT_C"/>
    <property type="match status" value="1"/>
</dbReference>
<dbReference type="Pfam" id="PF04775">
    <property type="entry name" value="Bile_Hydr_Trans"/>
    <property type="match status" value="1"/>
</dbReference>
<dbReference type="PIRSF" id="PIRSF016521">
    <property type="entry name" value="Acyl-CoA_hydro"/>
    <property type="match status" value="1"/>
</dbReference>
<dbReference type="SUPFAM" id="SSF53474">
    <property type="entry name" value="alpha/beta-Hydrolases"/>
    <property type="match status" value="1"/>
</dbReference>
<reference key="1">
    <citation type="journal article" date="1994" name="J. Biol. Chem.">
        <title>Glycine and taurine conjugation of bile acids by a single enzyme. Molecular cloning and expression of human liver bile acid CoA:amino acid N-acyltransferase.</title>
        <authorList>
            <person name="Falany C.N."/>
            <person name="Johnson M.R."/>
            <person name="Barnes S."/>
            <person name="Diasio R.B."/>
        </authorList>
    </citation>
    <scope>NUCLEOTIDE SEQUENCE [MRNA]</scope>
    <scope>PROTEIN SEQUENCE OF 1-17</scope>
    <scope>FUNCTION</scope>
    <scope>CATALYTIC ACTIVITY</scope>
    <scope>BIOPHYSICOCHEMICAL PROPERTIES</scope>
    <scope>SUBCELLULAR LOCATION</scope>
    <source>
        <tissue>Liver</tissue>
    </source>
</reference>
<reference key="2">
    <citation type="submission" date="2004-06" db="EMBL/GenBank/DDBJ databases">
        <title>Cloning of human full open reading frames in Gateway(TM) system entry vector (pDONR201).</title>
        <authorList>
            <person name="Ebert L."/>
            <person name="Schick M."/>
            <person name="Neubert P."/>
            <person name="Schatten R."/>
            <person name="Henze S."/>
            <person name="Korn B."/>
        </authorList>
    </citation>
    <scope>NUCLEOTIDE SEQUENCE [LARGE SCALE MRNA]</scope>
    <scope>VARIANT GLN-20</scope>
</reference>
<reference key="3">
    <citation type="journal article" date="2004" name="Nature">
        <title>DNA sequence and analysis of human chromosome 9.</title>
        <authorList>
            <person name="Humphray S.J."/>
            <person name="Oliver K."/>
            <person name="Hunt A.R."/>
            <person name="Plumb R.W."/>
            <person name="Loveland J.E."/>
            <person name="Howe K.L."/>
            <person name="Andrews T.D."/>
            <person name="Searle S."/>
            <person name="Hunt S.E."/>
            <person name="Scott C.E."/>
            <person name="Jones M.C."/>
            <person name="Ainscough R."/>
            <person name="Almeida J.P."/>
            <person name="Ambrose K.D."/>
            <person name="Ashwell R.I.S."/>
            <person name="Babbage A.K."/>
            <person name="Babbage S."/>
            <person name="Bagguley C.L."/>
            <person name="Bailey J."/>
            <person name="Banerjee R."/>
            <person name="Barker D.J."/>
            <person name="Barlow K.F."/>
            <person name="Bates K."/>
            <person name="Beasley H."/>
            <person name="Beasley O."/>
            <person name="Bird C.P."/>
            <person name="Bray-Allen S."/>
            <person name="Brown A.J."/>
            <person name="Brown J.Y."/>
            <person name="Burford D."/>
            <person name="Burrill W."/>
            <person name="Burton J."/>
            <person name="Carder C."/>
            <person name="Carter N.P."/>
            <person name="Chapman J.C."/>
            <person name="Chen Y."/>
            <person name="Clarke G."/>
            <person name="Clark S.Y."/>
            <person name="Clee C.M."/>
            <person name="Clegg S."/>
            <person name="Collier R.E."/>
            <person name="Corby N."/>
            <person name="Crosier M."/>
            <person name="Cummings A.T."/>
            <person name="Davies J."/>
            <person name="Dhami P."/>
            <person name="Dunn M."/>
            <person name="Dutta I."/>
            <person name="Dyer L.W."/>
            <person name="Earthrowl M.E."/>
            <person name="Faulkner L."/>
            <person name="Fleming C.J."/>
            <person name="Frankish A."/>
            <person name="Frankland J.A."/>
            <person name="French L."/>
            <person name="Fricker D.G."/>
            <person name="Garner P."/>
            <person name="Garnett J."/>
            <person name="Ghori J."/>
            <person name="Gilbert J.G.R."/>
            <person name="Glison C."/>
            <person name="Grafham D.V."/>
            <person name="Gribble S."/>
            <person name="Griffiths C."/>
            <person name="Griffiths-Jones S."/>
            <person name="Grocock R."/>
            <person name="Guy J."/>
            <person name="Hall R.E."/>
            <person name="Hammond S."/>
            <person name="Harley J.L."/>
            <person name="Harrison E.S.I."/>
            <person name="Hart E.A."/>
            <person name="Heath P.D."/>
            <person name="Henderson C.D."/>
            <person name="Hopkins B.L."/>
            <person name="Howard P.J."/>
            <person name="Howden P.J."/>
            <person name="Huckle E."/>
            <person name="Johnson C."/>
            <person name="Johnson D."/>
            <person name="Joy A.A."/>
            <person name="Kay M."/>
            <person name="Keenan S."/>
            <person name="Kershaw J.K."/>
            <person name="Kimberley A.M."/>
            <person name="King A."/>
            <person name="Knights A."/>
            <person name="Laird G.K."/>
            <person name="Langford C."/>
            <person name="Lawlor S."/>
            <person name="Leongamornlert D.A."/>
            <person name="Leversha M."/>
            <person name="Lloyd C."/>
            <person name="Lloyd D.M."/>
            <person name="Lovell J."/>
            <person name="Martin S."/>
            <person name="Mashreghi-Mohammadi M."/>
            <person name="Matthews L."/>
            <person name="McLaren S."/>
            <person name="McLay K.E."/>
            <person name="McMurray A."/>
            <person name="Milne S."/>
            <person name="Nickerson T."/>
            <person name="Nisbett J."/>
            <person name="Nordsiek G."/>
            <person name="Pearce A.V."/>
            <person name="Peck A.I."/>
            <person name="Porter K.M."/>
            <person name="Pandian R."/>
            <person name="Pelan S."/>
            <person name="Phillimore B."/>
            <person name="Povey S."/>
            <person name="Ramsey Y."/>
            <person name="Rand V."/>
            <person name="Scharfe M."/>
            <person name="Sehra H.K."/>
            <person name="Shownkeen R."/>
            <person name="Sims S.K."/>
            <person name="Skuce C.D."/>
            <person name="Smith M."/>
            <person name="Steward C.A."/>
            <person name="Swarbreck D."/>
            <person name="Sycamore N."/>
            <person name="Tester J."/>
            <person name="Thorpe A."/>
            <person name="Tracey A."/>
            <person name="Tromans A."/>
            <person name="Thomas D.W."/>
            <person name="Wall M."/>
            <person name="Wallis J.M."/>
            <person name="West A.P."/>
            <person name="Whitehead S.L."/>
            <person name="Willey D.L."/>
            <person name="Williams S.A."/>
            <person name="Wilming L."/>
            <person name="Wray P.W."/>
            <person name="Young L."/>
            <person name="Ashurst J.L."/>
            <person name="Coulson A."/>
            <person name="Blocker H."/>
            <person name="Durbin R.M."/>
            <person name="Sulston J.E."/>
            <person name="Hubbard T."/>
            <person name="Jackson M.J."/>
            <person name="Bentley D.R."/>
            <person name="Beck S."/>
            <person name="Rogers J."/>
            <person name="Dunham I."/>
        </authorList>
    </citation>
    <scope>NUCLEOTIDE SEQUENCE [LARGE SCALE GENOMIC DNA]</scope>
</reference>
<reference key="4">
    <citation type="submission" date="2005-07" db="EMBL/GenBank/DDBJ databases">
        <authorList>
            <person name="Mural R.J."/>
            <person name="Istrail S."/>
            <person name="Sutton G.G."/>
            <person name="Florea L."/>
            <person name="Halpern A.L."/>
            <person name="Mobarry C.M."/>
            <person name="Lippert R."/>
            <person name="Walenz B."/>
            <person name="Shatkay H."/>
            <person name="Dew I."/>
            <person name="Miller J.R."/>
            <person name="Flanigan M.J."/>
            <person name="Edwards N.J."/>
            <person name="Bolanos R."/>
            <person name="Fasulo D."/>
            <person name="Halldorsson B.V."/>
            <person name="Hannenhalli S."/>
            <person name="Turner R."/>
            <person name="Yooseph S."/>
            <person name="Lu F."/>
            <person name="Nusskern D.R."/>
            <person name="Shue B.C."/>
            <person name="Zheng X.H."/>
            <person name="Zhong F."/>
            <person name="Delcher A.L."/>
            <person name="Huson D.H."/>
            <person name="Kravitz S.A."/>
            <person name="Mouchard L."/>
            <person name="Reinert K."/>
            <person name="Remington K.A."/>
            <person name="Clark A.G."/>
            <person name="Waterman M.S."/>
            <person name="Eichler E.E."/>
            <person name="Adams M.D."/>
            <person name="Hunkapiller M.W."/>
            <person name="Myers E.W."/>
            <person name="Venter J.C."/>
        </authorList>
    </citation>
    <scope>NUCLEOTIDE SEQUENCE [LARGE SCALE GENOMIC DNA]</scope>
    <scope>VARIANT GLN-20</scope>
</reference>
<reference key="5">
    <citation type="journal article" date="2004" name="Genome Res.">
        <title>The status, quality, and expansion of the NIH full-length cDNA project: the Mammalian Gene Collection (MGC).</title>
        <authorList>
            <consortium name="The MGC Project Team"/>
        </authorList>
    </citation>
    <scope>NUCLEOTIDE SEQUENCE [LARGE SCALE MRNA]</scope>
    <scope>VARIANT GLN-20</scope>
    <source>
        <tissue>Liver</tissue>
    </source>
</reference>
<reference key="6">
    <citation type="journal article" date="1991" name="J. Biol. Chem.">
        <title>Purification and characterization of bile acid-CoA:amino acid N-acyltransferase from human liver.</title>
        <authorList>
            <person name="Johnson M.R."/>
            <person name="Barnes S."/>
            <person name="Kwakye J.B."/>
            <person name="Diasio R.B."/>
        </authorList>
    </citation>
    <scope>FUNCTION</scope>
    <scope>TISSUE SPECIFICITY</scope>
    <scope>CATALYTIC ACTIVITY</scope>
    <scope>SUBUNIT</scope>
    <scope>BIOPHYSICOCHEMICAL PROPERTIES</scope>
    <source>
        <tissue>Liver</tissue>
    </source>
</reference>
<reference key="7">
    <citation type="journal article" date="2002" name="J. Biol. Chem.">
        <title>Conserved residues in the putative catalytic triad of human bile acid Coenzyme A:amino acid N-acyltransferase.</title>
        <authorList>
            <person name="Sfakianos M.K."/>
            <person name="Wilson L."/>
            <person name="Sakalian M."/>
            <person name="Falany C.N."/>
            <person name="Barnes S."/>
        </authorList>
    </citation>
    <scope>FUNCTION</scope>
    <scope>CATALYTIC ACTIVITY</scope>
    <scope>MUTAGENESIS OF CYS-235; ASP-328 AND HIS-362</scope>
    <scope>BIOPHYSICOCHEMICAL PROPERTIES</scope>
</reference>
<reference key="8">
    <citation type="journal article" date="2003" name="J. Biol. Chem.">
        <title>The human bile acid-CoA:amino acid N-acyltransferase functions in the conjugation of fatty acids to glycine.</title>
        <authorList>
            <person name="O'Byrne J."/>
            <person name="Hunt M.C."/>
            <person name="Rai D.K."/>
            <person name="Saeki M."/>
            <person name="Alexson S.E."/>
        </authorList>
    </citation>
    <scope>FUNCTION</scope>
    <scope>CATALYTIC ACTIVITY</scope>
    <scope>SUBCELLULAR LOCATION</scope>
    <scope>TISSUE SPECIFICITY</scope>
    <scope>MUTAGENESIS OF CYS-235; ASP-328; HIS-362; CYS-372 AND GLN-417</scope>
    <scope>BIOPHYSICOCHEMICAL PROPERTIES</scope>
</reference>
<reference key="9">
    <citation type="journal article" date="2013" name="Gastroenterology">
        <title>Genetic defects in bile acid conjugation cause fat-soluble vitamin deficiency.</title>
        <authorList>
            <person name="Setchell K.D."/>
            <person name="Heubi J.E."/>
            <person name="Shah S."/>
            <person name="Lavine J.E."/>
            <person name="Suskind D."/>
            <person name="Al-Edreesi M."/>
            <person name="Potter C."/>
            <person name="Russell D.W."/>
            <person name="O'Connell N.C."/>
            <person name="Wolfe B."/>
            <person name="Jha P."/>
            <person name="Zhang W."/>
            <person name="Bove K.E."/>
            <person name="Knisely A.S."/>
            <person name="Hofmann A.F."/>
            <person name="Rosenthal P."/>
            <person name="Bull L.N."/>
        </authorList>
    </citation>
    <scope>INVOLVEMENT IN FHCA3</scope>
    <scope>VARIANTS FHCA3 20-ARG--LEU-418 DEL; VAL-69; THR-84 AND ARG-386</scope>
    <scope>CHARACTERIZATION OF VARIANTS FHCA3 20-ARG--LEU-418 DEL; VAL-69 AND ARG-386</scope>
    <scope>SUBCELLULAR LOCATION</scope>
    <scope>TISSUE SPECIFICITY</scope>
</reference>
<reference key="10">
    <citation type="journal article" date="2014" name="J. Proteomics">
        <title>An enzyme assisted RP-RPLC approach for in-depth analysis of human liver phosphoproteome.</title>
        <authorList>
            <person name="Bian Y."/>
            <person name="Song C."/>
            <person name="Cheng K."/>
            <person name="Dong M."/>
            <person name="Wang F."/>
            <person name="Huang J."/>
            <person name="Sun D."/>
            <person name="Wang L."/>
            <person name="Ye M."/>
            <person name="Zou H."/>
        </authorList>
    </citation>
    <scope>IDENTIFICATION BY MASS SPECTROMETRY [LARGE SCALE ANALYSIS]</scope>
    <source>
        <tissue>Liver</tissue>
    </source>
</reference>
<reference key="11">
    <citation type="journal article" date="2003" name="Nat. Genet.">
        <title>Complex inheritance of familial hypercholanemia with associated mutations in TJP2 and BAAT.</title>
        <authorList>
            <person name="Carlton V.E.H."/>
            <person name="Harris B.Z."/>
            <person name="Puffenberger E.G."/>
            <person name="Batta A.K."/>
            <person name="Knisely A.S."/>
            <person name="Robinson D.L."/>
            <person name="Strauss K.A."/>
            <person name="Shneider B.L."/>
            <person name="Lim W.A."/>
            <person name="Salen G."/>
            <person name="Morton D.H."/>
            <person name="Bull L.N."/>
        </authorList>
    </citation>
    <scope>INVOLVEMENT IN FHCA3</scope>
    <scope>VARIANT FHCA3 VAL-76</scope>
</reference>
<name>BAAT_HUMAN</name>
<sequence>MIQLTATPVSALVDEPVHIRATGLIPFQMVSFQASLEDENGDMFYSQAHYRANEFGEVDLNHASSLGGDYMGVHPMGLFWSLKPEKLLTRLLKRDVMNRPFQVQVKLYDLELIVNNKVASAPKASLTLERWYVAPGVTRIKVREGRLRGALFLPPGEGLFPGVIDLFGGLGGLLEFRASLLASRGFASLALAYHNYEDLPRKPEVTDLEYFEEAANFLLRHPKVFGSGVGVVSVCQGVQIGLSMAIYLKQVTATVLINGTNFPFGIPQVYHGQIHQPLPHSAQLISTNALGLLELYRTFETTQVGASQYLFPIEEAQGQFLFIVGEGDKTINSKAHAEQAIGQLKRHGKNNWTLLSYPGAGHLIEPPYSPLCCASTTHDLRLHWGGEVIPHAAAQEHAWKEIQRFLRKHLIPDVTSQL</sequence>
<evidence type="ECO:0000250" key="1">
    <source>
        <dbReference type="UniProtKB" id="Q63276"/>
    </source>
</evidence>
<evidence type="ECO:0000269" key="2">
    <source>
    </source>
</evidence>
<evidence type="ECO:0000269" key="3">
    <source>
    </source>
</evidence>
<evidence type="ECO:0000269" key="4">
    <source>
    </source>
</evidence>
<evidence type="ECO:0000269" key="5">
    <source>
    </source>
</evidence>
<evidence type="ECO:0000269" key="6">
    <source>
    </source>
</evidence>
<evidence type="ECO:0000269" key="7">
    <source>
    </source>
</evidence>
<evidence type="ECO:0000269" key="8">
    <source>
    </source>
</evidence>
<evidence type="ECO:0000269" key="9">
    <source ref="2"/>
</evidence>
<evidence type="ECO:0000269" key="10">
    <source ref="4"/>
</evidence>
<evidence type="ECO:0000303" key="11">
    <source>
    </source>
</evidence>
<evidence type="ECO:0000303" key="12">
    <source>
    </source>
</evidence>
<evidence type="ECO:0000303" key="13">
    <source>
    </source>
</evidence>
<evidence type="ECO:0000305" key="14"/>
<evidence type="ECO:0000305" key="15">
    <source>
    </source>
</evidence>
<evidence type="ECO:0000305" key="16">
    <source>
    </source>
</evidence>
<evidence type="ECO:0000305" key="17">
    <source>
    </source>
</evidence>
<evidence type="ECO:0000305" key="18">
    <source>
    </source>
</evidence>
<proteinExistence type="evidence at protein level"/>
<feature type="chain" id="PRO_0000202159" description="Bile acid-CoA:amino acid N-acyltransferase">
    <location>
        <begin position="1"/>
        <end position="418"/>
    </location>
</feature>
<feature type="active site" description="Charge relay system" evidence="14">
    <location>
        <position position="235"/>
    </location>
</feature>
<feature type="active site" description="Charge relay system" evidence="14">
    <location>
        <position position="328"/>
    </location>
</feature>
<feature type="active site" description="Charge relay system" evidence="14">
    <location>
        <position position="362"/>
    </location>
</feature>
<feature type="modified residue" description="Phosphoserine" evidence="1">
    <location>
        <position position="125"/>
    </location>
</feature>
<feature type="modified residue" description="Phosphoserine" evidence="1">
    <location>
        <position position="416"/>
    </location>
</feature>
<feature type="sequence variant" id="VAR_085492" description="In FHCA3; contrary to wild-type, undetectable expression in hepatocytes." evidence="7">
    <location>
        <begin position="20"/>
        <end position="418"/>
    </location>
</feature>
<feature type="sequence variant" id="VAR_052303" description="In dbSNP:rs1572983." evidence="5 9 10">
    <original>R</original>
    <variation>Q</variation>
    <location>
        <position position="20"/>
    </location>
</feature>
<feature type="sequence variant" id="VAR_085493" description="In FHCA3; uncertain significance; contrary to wild-type, undetectable expression in hepatocytes." evidence="7">
    <original>D</original>
    <variation>V</variation>
    <location>
        <position position="69"/>
    </location>
</feature>
<feature type="sequence variant" id="VAR_023737" description="In FHCA3; dbSNP:rs28937579." evidence="3">
    <original>M</original>
    <variation>V</variation>
    <location>
        <position position="76"/>
    </location>
</feature>
<feature type="sequence variant" id="VAR_085494" description="In FHCA3; uncertain significance." evidence="7">
    <original>P</original>
    <variation>T</variation>
    <location>
        <position position="84"/>
    </location>
</feature>
<feature type="sequence variant" id="VAR_085495" description="In FHCA3; uncertain significance; contrary to wild-type, undetectable expression in hepatocytes." evidence="7">
    <original>G</original>
    <variation>R</variation>
    <location>
        <position position="386"/>
    </location>
</feature>
<feature type="mutagenesis site" description="Abolishes N-acyltransferase activity." evidence="2 4">
    <original>C</original>
    <variation>A</variation>
    <location>
        <position position="235"/>
    </location>
</feature>
<feature type="mutagenesis site" description="Lowers N-acyltransferase activity; enhanced thioesterase activity presumably dependent on the formation of a bile acid-enzyme covalent intermediate via a thioester bond." evidence="2 4">
    <original>C</original>
    <variation>S</variation>
    <location>
        <position position="235"/>
    </location>
</feature>
<feature type="mutagenesis site" description="Abolishes N-acyltransferase activity." evidence="2 4">
    <original>D</original>
    <variation>A</variation>
    <location>
        <position position="328"/>
    </location>
</feature>
<feature type="mutagenesis site" description="Abolishes N-acyltransferase activity." evidence="2">
    <original>H</original>
    <variation>A</variation>
    <location>
        <position position="362"/>
    </location>
</feature>
<feature type="mutagenesis site" description="Abolishes N-acyltransferase activity." evidence="4">
    <original>H</original>
    <variation>Q</variation>
    <location>
        <position position="362"/>
    </location>
</feature>
<feature type="mutagenesis site" description="Retains N-acyltransferase activity." evidence="4">
    <original>C</original>
    <variation>A</variation>
    <location>
        <position position="372"/>
    </location>
</feature>
<feature type="mutagenesis site" description="Translocation to peroxisomes." evidence="4">
    <original>Q</original>
    <variation>K</variation>
    <location>
        <position position="417"/>
    </location>
</feature>
<accession>Q14032</accession>
<accession>Q3B7W9</accession>
<accession>Q96L31</accession>
<keyword id="KW-0012">Acyltransferase</keyword>
<keyword id="KW-0963">Cytoplasm</keyword>
<keyword id="KW-0903">Direct protein sequencing</keyword>
<keyword id="KW-0225">Disease variant</keyword>
<keyword id="KW-0276">Fatty acid metabolism</keyword>
<keyword id="KW-0378">Hydrolase</keyword>
<keyword id="KW-0443">Lipid metabolism</keyword>
<keyword id="KW-0576">Peroxisome</keyword>
<keyword id="KW-0597">Phosphoprotein</keyword>
<keyword id="KW-1267">Proteomics identification</keyword>
<keyword id="KW-1185">Reference proteome</keyword>
<keyword id="KW-0719">Serine esterase</keyword>
<keyword id="KW-0808">Transferase</keyword>
<comment type="function">
    <text evidence="2 4 6 8 12 13">Catalyzes the amidation of bile acids (BAs) with the amino acids taurine and glycine (PubMed:12239217, PubMed:12810727, PubMed:2037576, PubMed:8034703). More than 95% of the BAs are N-acyl amidates with glycine and taurine (PubMed:8034703). Amidation of BAs in the liver with glycine or taurine prior to their excretion into bile is an important biochemical event in bile acid metabolism (PubMed:12810727). This conjugation (or amidation) plays several important biological roles in that it promotes the secretion of BAs and cholesterol into bile and increases the detergent properties of BAs in the intestine, which facilitates lipid and vitamin absorption (PubMed:12810727). May also act as an acyl-CoA thioesterase that regulates intracellular levels of free fatty acids (PubMed:12239217, PubMed:12810727, PubMed:8034703). In vitro, catalyzes the hydrolysis of long- and very long-chain saturated acyl-CoAs to the free fatty acid and coenzyme A (CoASH), and conjugates glycine to these acyl-CoAs (PubMed:12810727).</text>
</comment>
<comment type="catalytic activity">
    <reaction evidence="2 4 6 8">
        <text>choloyl-CoA + glycine = glycocholate + CoA + H(+)</text>
        <dbReference type="Rhea" id="RHEA:14001"/>
        <dbReference type="ChEBI" id="CHEBI:15378"/>
        <dbReference type="ChEBI" id="CHEBI:29746"/>
        <dbReference type="ChEBI" id="CHEBI:57287"/>
        <dbReference type="ChEBI" id="CHEBI:57305"/>
        <dbReference type="ChEBI" id="CHEBI:57373"/>
        <dbReference type="EC" id="2.3.1.65"/>
    </reaction>
    <physiologicalReaction direction="left-to-right" evidence="15 16 17 18">
        <dbReference type="Rhea" id="RHEA:14002"/>
    </physiologicalReaction>
</comment>
<comment type="catalytic activity">
    <reaction evidence="4">
        <text>hexadecanoyl-CoA + H2O = hexadecanoate + CoA + H(+)</text>
        <dbReference type="Rhea" id="RHEA:16645"/>
        <dbReference type="ChEBI" id="CHEBI:7896"/>
        <dbReference type="ChEBI" id="CHEBI:15377"/>
        <dbReference type="ChEBI" id="CHEBI:15378"/>
        <dbReference type="ChEBI" id="CHEBI:57287"/>
        <dbReference type="ChEBI" id="CHEBI:57379"/>
        <dbReference type="EC" id="3.1.2.2"/>
    </reaction>
    <physiologicalReaction direction="left-to-right" evidence="16">
        <dbReference type="Rhea" id="RHEA:16646"/>
    </physiologicalReaction>
</comment>
<comment type="catalytic activity">
    <reaction evidence="2 4 8">
        <text>choloyl-CoA + H2O = cholate + CoA + H(+)</text>
        <dbReference type="Rhea" id="RHEA:14541"/>
        <dbReference type="ChEBI" id="CHEBI:15377"/>
        <dbReference type="ChEBI" id="CHEBI:15378"/>
        <dbReference type="ChEBI" id="CHEBI:29747"/>
        <dbReference type="ChEBI" id="CHEBI:57287"/>
        <dbReference type="ChEBI" id="CHEBI:57373"/>
        <dbReference type="EC" id="3.1.2.27"/>
    </reaction>
    <physiologicalReaction direction="left-to-right" evidence="15 16">
        <dbReference type="Rhea" id="RHEA:14542"/>
    </physiologicalReaction>
</comment>
<comment type="catalytic activity">
    <reaction evidence="4">
        <text>chenodeoxycholoyl-CoA + H2O = chenodeoxycholate + CoA + H(+)</text>
        <dbReference type="Rhea" id="RHEA:31511"/>
        <dbReference type="ChEBI" id="CHEBI:15377"/>
        <dbReference type="ChEBI" id="CHEBI:15378"/>
        <dbReference type="ChEBI" id="CHEBI:36234"/>
        <dbReference type="ChEBI" id="CHEBI:57287"/>
        <dbReference type="ChEBI" id="CHEBI:62989"/>
        <dbReference type="EC" id="3.1.2.27"/>
    </reaction>
    <physiologicalReaction direction="left-to-right" evidence="16">
        <dbReference type="Rhea" id="RHEA:31512"/>
    </physiologicalReaction>
</comment>
<comment type="catalytic activity">
    <reaction evidence="4">
        <text>eicosanoyl-CoA + H2O = eicosanoate + CoA + H(+)</text>
        <dbReference type="Rhea" id="RHEA:40147"/>
        <dbReference type="ChEBI" id="CHEBI:15377"/>
        <dbReference type="ChEBI" id="CHEBI:15378"/>
        <dbReference type="ChEBI" id="CHEBI:32360"/>
        <dbReference type="ChEBI" id="CHEBI:57287"/>
        <dbReference type="ChEBI" id="CHEBI:57380"/>
    </reaction>
    <physiologicalReaction direction="left-to-right" evidence="16">
        <dbReference type="Rhea" id="RHEA:40148"/>
    </physiologicalReaction>
</comment>
<comment type="catalytic activity">
    <reaction evidence="4">
        <text>octadecanoyl-CoA + H2O = octadecanoate + CoA + H(+)</text>
        <dbReference type="Rhea" id="RHEA:30139"/>
        <dbReference type="ChEBI" id="CHEBI:15377"/>
        <dbReference type="ChEBI" id="CHEBI:15378"/>
        <dbReference type="ChEBI" id="CHEBI:25629"/>
        <dbReference type="ChEBI" id="CHEBI:57287"/>
        <dbReference type="ChEBI" id="CHEBI:57394"/>
    </reaction>
    <physiologicalReaction direction="left-to-right" evidence="16">
        <dbReference type="Rhea" id="RHEA:30140"/>
    </physiologicalReaction>
</comment>
<comment type="catalytic activity">
    <reaction evidence="4">
        <text>docosanoyl-CoA + H2O = docosanoate + CoA + H(+)</text>
        <dbReference type="Rhea" id="RHEA:40783"/>
        <dbReference type="ChEBI" id="CHEBI:15377"/>
        <dbReference type="ChEBI" id="CHEBI:15378"/>
        <dbReference type="ChEBI" id="CHEBI:23858"/>
        <dbReference type="ChEBI" id="CHEBI:57287"/>
        <dbReference type="ChEBI" id="CHEBI:65059"/>
    </reaction>
    <physiologicalReaction direction="left-to-right" evidence="16">
        <dbReference type="Rhea" id="RHEA:40784"/>
    </physiologicalReaction>
</comment>
<comment type="catalytic activity">
    <reaction evidence="4">
        <text>tetracosanoyl-CoA + H2O = tetracosanoate + CoA + H(+)</text>
        <dbReference type="Rhea" id="RHEA:40787"/>
        <dbReference type="ChEBI" id="CHEBI:15377"/>
        <dbReference type="ChEBI" id="CHEBI:15378"/>
        <dbReference type="ChEBI" id="CHEBI:31014"/>
        <dbReference type="ChEBI" id="CHEBI:57287"/>
        <dbReference type="ChEBI" id="CHEBI:65052"/>
    </reaction>
    <physiologicalReaction direction="left-to-right" evidence="16">
        <dbReference type="Rhea" id="RHEA:40788"/>
    </physiologicalReaction>
</comment>
<comment type="catalytic activity">
    <reaction evidence="4">
        <text>hexacosanoyl-CoA + H2O = hexacosanoate + CoA + H(+)</text>
        <dbReference type="Rhea" id="RHEA:40791"/>
        <dbReference type="ChEBI" id="CHEBI:15377"/>
        <dbReference type="ChEBI" id="CHEBI:15378"/>
        <dbReference type="ChEBI" id="CHEBI:31013"/>
        <dbReference type="ChEBI" id="CHEBI:57287"/>
        <dbReference type="ChEBI" id="CHEBI:64868"/>
    </reaction>
    <physiologicalReaction direction="left-to-right" evidence="16">
        <dbReference type="Rhea" id="RHEA:40792"/>
    </physiologicalReaction>
</comment>
<comment type="catalytic activity">
    <reaction evidence="4">
        <text>dodecanoyl-CoA + H2O = dodecanoate + CoA + H(+)</text>
        <dbReference type="Rhea" id="RHEA:30135"/>
        <dbReference type="ChEBI" id="CHEBI:15377"/>
        <dbReference type="ChEBI" id="CHEBI:15378"/>
        <dbReference type="ChEBI" id="CHEBI:18262"/>
        <dbReference type="ChEBI" id="CHEBI:57287"/>
        <dbReference type="ChEBI" id="CHEBI:57375"/>
    </reaction>
    <physiologicalReaction direction="left-to-right" evidence="16">
        <dbReference type="Rhea" id="RHEA:30136"/>
    </physiologicalReaction>
</comment>
<comment type="catalytic activity">
    <reaction evidence="4">
        <text>tetradecanoyl-CoA + H2O = tetradecanoate + CoA + H(+)</text>
        <dbReference type="Rhea" id="RHEA:40119"/>
        <dbReference type="ChEBI" id="CHEBI:15377"/>
        <dbReference type="ChEBI" id="CHEBI:15378"/>
        <dbReference type="ChEBI" id="CHEBI:30807"/>
        <dbReference type="ChEBI" id="CHEBI:57287"/>
        <dbReference type="ChEBI" id="CHEBI:57385"/>
    </reaction>
    <physiologicalReaction direction="left-to-right" evidence="16">
        <dbReference type="Rhea" id="RHEA:40120"/>
    </physiologicalReaction>
</comment>
<comment type="catalytic activity">
    <reaction evidence="4 8">
        <text>choloyl-CoA + taurine = taurocholate + CoA + H(+)</text>
        <dbReference type="Rhea" id="RHEA:47100"/>
        <dbReference type="ChEBI" id="CHEBI:15378"/>
        <dbReference type="ChEBI" id="CHEBI:36257"/>
        <dbReference type="ChEBI" id="CHEBI:57287"/>
        <dbReference type="ChEBI" id="CHEBI:57373"/>
        <dbReference type="ChEBI" id="CHEBI:507393"/>
    </reaction>
    <physiologicalReaction direction="left-to-right" evidence="16 18">
        <dbReference type="Rhea" id="RHEA:47101"/>
    </physiologicalReaction>
</comment>
<comment type="catalytic activity">
    <reaction evidence="4">
        <text>chenodeoxycholoyl-CoA + glycine = glycochenodeoxycholate + CoA + H(+)</text>
        <dbReference type="Rhea" id="RHEA:49788"/>
        <dbReference type="ChEBI" id="CHEBI:15378"/>
        <dbReference type="ChEBI" id="CHEBI:36252"/>
        <dbReference type="ChEBI" id="CHEBI:57287"/>
        <dbReference type="ChEBI" id="CHEBI:57305"/>
        <dbReference type="ChEBI" id="CHEBI:62989"/>
    </reaction>
    <physiologicalReaction direction="left-to-right" evidence="16">
        <dbReference type="Rhea" id="RHEA:49789"/>
    </physiologicalReaction>
</comment>
<comment type="catalytic activity">
    <reaction evidence="4">
        <text>chenodeoxycholoyl-CoA + taurine = taurochenodeoxycholate + CoA + H(+)</text>
        <dbReference type="Rhea" id="RHEA:49784"/>
        <dbReference type="ChEBI" id="CHEBI:9407"/>
        <dbReference type="ChEBI" id="CHEBI:15378"/>
        <dbReference type="ChEBI" id="CHEBI:57287"/>
        <dbReference type="ChEBI" id="CHEBI:62989"/>
        <dbReference type="ChEBI" id="CHEBI:507393"/>
    </reaction>
    <physiologicalReaction direction="left-to-right" evidence="16">
        <dbReference type="Rhea" id="RHEA:49785"/>
    </physiologicalReaction>
</comment>
<comment type="catalytic activity">
    <reaction evidence="4">
        <text>eicosanoyl-CoA + glycine = N-eicosanoylglycinate + CoA + H(+)</text>
        <dbReference type="Rhea" id="RHEA:49792"/>
        <dbReference type="ChEBI" id="CHEBI:15378"/>
        <dbReference type="ChEBI" id="CHEBI:57287"/>
        <dbReference type="ChEBI" id="CHEBI:57305"/>
        <dbReference type="ChEBI" id="CHEBI:57380"/>
        <dbReference type="ChEBI" id="CHEBI:87391"/>
    </reaction>
    <physiologicalReaction direction="left-to-right" evidence="16">
        <dbReference type="Rhea" id="RHEA:49793"/>
    </physiologicalReaction>
</comment>
<comment type="catalytic activity">
    <reaction evidence="4">
        <text>hexacosanoyl-CoA + glycine = N-hexacosanoylglycine + CoA + H(+)</text>
        <dbReference type="Rhea" id="RHEA:49772"/>
        <dbReference type="ChEBI" id="CHEBI:15378"/>
        <dbReference type="ChEBI" id="CHEBI:57287"/>
        <dbReference type="ChEBI" id="CHEBI:57305"/>
        <dbReference type="ChEBI" id="CHEBI:64868"/>
        <dbReference type="ChEBI" id="CHEBI:87414"/>
    </reaction>
    <physiologicalReaction direction="left-to-right" evidence="16">
        <dbReference type="Rhea" id="RHEA:49773"/>
    </physiologicalReaction>
</comment>
<comment type="catalytic activity">
    <reaction evidence="4">
        <text>docosanoyl-CoA + glycine = N-docosanoylglycine + CoA + H(+)</text>
        <dbReference type="Rhea" id="RHEA:49780"/>
        <dbReference type="ChEBI" id="CHEBI:15378"/>
        <dbReference type="ChEBI" id="CHEBI:57287"/>
        <dbReference type="ChEBI" id="CHEBI:57305"/>
        <dbReference type="ChEBI" id="CHEBI:65059"/>
        <dbReference type="ChEBI" id="CHEBI:87410"/>
    </reaction>
    <physiologicalReaction direction="left-to-right" evidence="16">
        <dbReference type="Rhea" id="RHEA:49781"/>
    </physiologicalReaction>
</comment>
<comment type="biophysicochemical properties">
    <kinetics>
        <KM evidence="6">1.1 mM for taurine toward choloyl-CoA</KM>
        <KM evidence="8">1.8 mM for taurine toward choloyl-CoA</KM>
        <KM evidence="8">5.6 mM for glycine toward choloyl-CoA</KM>
        <KM evidence="6">5.8 mM for glycine toward choloyl-CoA</KM>
        <KM evidence="6">2.2 mM for 2-fluoro-beta-alanine toward choloyl-CoA</KM>
        <KM evidence="4">19.3 uM for glycine toward arachidoyl-CoA</KM>
        <KM evidence="2">50.02 uM for choloyl-CoA (acyl-CoA thioesterase activity)</KM>
        <Vmax evidence="6">0.33 umol/min/mg enzyme with taurine as substrate for acyltransferase activity</Vmax>
        <Vmax evidence="6">0.19 umol/min/mg enzyme with 2-fluoro-beta-alanine as substrate for acyltransferase activity</Vmax>
        <Vmax evidence="6">0.77 umol/min/mg enzyme with glycine as substrate for acyltransferase activity</Vmax>
        <Vmax evidence="4">223.0 nmol/min/mg enzyme with arachidoyl-CoA as substrate for acyl-CoA thioesterase activity</Vmax>
        <Vmax evidence="2">1.48 umol/min/ug enzyme for acyl-CoA thioesterase activity</Vmax>
    </kinetics>
</comment>
<comment type="subunit">
    <text evidence="6">Monomer.</text>
</comment>
<comment type="interaction">
    <interactant intactId="EBI-8994378">
        <id>Q14032</id>
    </interactant>
    <interactant intactId="EBI-718729">
        <id>P55212</id>
        <label>CASP6</label>
    </interactant>
    <organismsDiffer>false</organismsDiffer>
    <experiments>3</experiments>
</comment>
<comment type="interaction">
    <interactant intactId="EBI-8994378">
        <id>Q14032</id>
    </interactant>
    <interactant intactId="EBI-10181276">
        <id>Q0D2H9</id>
        <label>GOLGA8DP</label>
    </interactant>
    <organismsDiffer>false</organismsDiffer>
    <experiments>3</experiments>
</comment>
<comment type="interaction">
    <interactant intactId="EBI-8994378">
        <id>Q14032</id>
    </interactant>
    <interactant intactId="EBI-10181260">
        <id>Q08AF8</id>
        <label>GOLGA8G</label>
    </interactant>
    <organismsDiffer>false</organismsDiffer>
    <experiments>3</experiments>
</comment>
<comment type="interaction">
    <interactant intactId="EBI-8994378">
        <id>Q14032</id>
    </interactant>
    <interactant intactId="EBI-473886">
        <id>O00291</id>
        <label>HIP1</label>
    </interactant>
    <organismsDiffer>false</organismsDiffer>
    <experiments>3</experiments>
</comment>
<comment type="interaction">
    <interactant intactId="EBI-8994378">
        <id>Q14032</id>
    </interactant>
    <interactant intactId="EBI-712096">
        <id>P30519</id>
        <label>HMOX2</label>
    </interactant>
    <organismsDiffer>false</organismsDiffer>
    <experiments>3</experiments>
</comment>
<comment type="interaction">
    <interactant intactId="EBI-8994378">
        <id>Q14032</id>
    </interactant>
    <interactant intactId="EBI-399080">
        <id>Q92993</id>
        <label>KAT5</label>
    </interactant>
    <organismsDiffer>false</organismsDiffer>
    <experiments>3</experiments>
</comment>
<comment type="interaction">
    <interactant intactId="EBI-8994378">
        <id>Q14032</id>
    </interactant>
    <interactant intactId="EBI-21591415">
        <id>P13473-2</id>
        <label>LAMP2</label>
    </interactant>
    <organismsDiffer>false</organismsDiffer>
    <experiments>3</experiments>
</comment>
<comment type="interaction">
    <interactant intactId="EBI-8994378">
        <id>Q14032</id>
    </interactant>
    <interactant intactId="EBI-11742507">
        <id>Q8TAP4-4</id>
        <label>LMO3</label>
    </interactant>
    <organismsDiffer>false</organismsDiffer>
    <experiments>3</experiments>
</comment>
<comment type="interaction">
    <interactant intactId="EBI-8994378">
        <id>Q14032</id>
    </interactant>
    <interactant intactId="EBI-25884072">
        <id>P62937-2</id>
        <label>PPIA</label>
    </interactant>
    <organismsDiffer>false</organismsDiffer>
    <experiments>3</experiments>
</comment>
<comment type="interaction">
    <interactant intactId="EBI-8994378">
        <id>Q14032</id>
    </interactant>
    <interactant intactId="EBI-5280197">
        <id>O75400-2</id>
        <label>PRPF40A</label>
    </interactant>
    <organismsDiffer>false</organismsDiffer>
    <experiments>3</experiments>
</comment>
<comment type="interaction">
    <interactant intactId="EBI-8994378">
        <id>Q14032</id>
    </interactant>
    <interactant intactId="EBI-286642">
        <id>P62826</id>
        <label>RAN</label>
    </interactant>
    <organismsDiffer>false</organismsDiffer>
    <experiments>3</experiments>
</comment>
<comment type="interaction">
    <interactant intactId="EBI-8994378">
        <id>Q14032</id>
    </interactant>
    <interactant intactId="EBI-9090795">
        <id>Q15047-2</id>
        <label>SETDB1</label>
    </interactant>
    <organismsDiffer>false</organismsDiffer>
    <experiments>3</experiments>
</comment>
<comment type="interaction">
    <interactant intactId="EBI-8994378">
        <id>Q14032</id>
    </interactant>
    <interactant intactId="EBI-2623095">
        <id>Q9Y371</id>
        <label>SH3GLB1</label>
    </interactant>
    <organismsDiffer>false</organismsDiffer>
    <experiments>3</experiments>
</comment>
<comment type="interaction">
    <interactant intactId="EBI-8994378">
        <id>Q14032</id>
    </interactant>
    <interactant intactId="EBI-359832">
        <id>P61981</id>
        <label>YWHAG</label>
    </interactant>
    <organismsDiffer>false</organismsDiffer>
    <experiments>3</experiments>
</comment>
<comment type="subcellular location">
    <subcellularLocation>
        <location evidence="4 7 8">Cytoplasm</location>
        <location evidence="4 7 8">Cytosol</location>
    </subcellularLocation>
    <subcellularLocation>
        <location evidence="1">Peroxisome</location>
    </subcellularLocation>
</comment>
<comment type="tissue specificity">
    <text evidence="4 6 7">Expressed in the gallbladder mucosa and pancreas (PubMed:12810727, PubMed:2037576). Expressed in hepatocytes (at protein level) (PubMed:12810727, PubMed:2037576, PubMed:23415802).</text>
</comment>
<comment type="disease" evidence="3 7">
    <disease id="DI-06059">
        <name>Hypercholanemia, familial 3</name>
        <acronym>FHCA3</acronym>
        <description>An autosomal recessive metabolic disorder characterized by reduced biliary secretion of conjugated bile acids, fat malabsorption, and fat-soluble vitamin deficiency. Clinical manifestations include rickets with variable growth failure due to vitamin D deficiency, and coagulopathy due to deficiency of vitamin K-dependent clotting factors. Additional variable features include pruritis, anemia, hepatomegaly, and bile duct proliferation on liver biopsy. Laboratory studies show abnormally increased levels of unconjugated bile acids.</description>
        <dbReference type="MIM" id="619232"/>
    </disease>
    <text>The disease is caused by variants affecting the gene represented in this entry.</text>
</comment>
<comment type="similarity">
    <text evidence="14">Belongs to the C/M/P thioester hydrolase family.</text>
</comment>
<gene>
    <name type="primary">BAAT</name>
</gene>
<organism>
    <name type="scientific">Homo sapiens</name>
    <name type="common">Human</name>
    <dbReference type="NCBI Taxonomy" id="9606"/>
    <lineage>
        <taxon>Eukaryota</taxon>
        <taxon>Metazoa</taxon>
        <taxon>Chordata</taxon>
        <taxon>Craniata</taxon>
        <taxon>Vertebrata</taxon>
        <taxon>Euteleostomi</taxon>
        <taxon>Mammalia</taxon>
        <taxon>Eutheria</taxon>
        <taxon>Euarchontoglires</taxon>
        <taxon>Primates</taxon>
        <taxon>Haplorrhini</taxon>
        <taxon>Catarrhini</taxon>
        <taxon>Hominidae</taxon>
        <taxon>Homo</taxon>
    </lineage>
</organism>
<protein>
    <recommendedName>
        <fullName evidence="13">Bile acid-CoA:amino acid N-acyltransferase</fullName>
        <shortName evidence="12">BACAT</shortName>
        <shortName evidence="13">BAT</shortName>
        <ecNumber evidence="2 4 6 8">2.3.1.65</ecNumber>
    </recommendedName>
    <alternativeName>
        <fullName evidence="11 12">Bile acid-CoA thioesterase</fullName>
    </alternativeName>
    <alternativeName>
        <fullName>Choloyl-CoA hydrolase</fullName>
        <ecNumber evidence="2 4 8">3.1.2.27</ecNumber>
    </alternativeName>
    <alternativeName>
        <fullName>Glycine N-choloyltransferase</fullName>
    </alternativeName>
    <alternativeName>
        <fullName evidence="12">Long-chain fatty-acyl-CoA hydrolase</fullName>
        <ecNumber evidence="4">3.1.2.2</ecNumber>
    </alternativeName>
</protein>